<proteinExistence type="inferred from homology"/>
<comment type="function">
    <text evidence="1">Catalyzes the acyloin condensation reaction between C atoms 2 and 3 of pyruvate and glyceraldehyde 3-phosphate to yield 1-deoxy-D-xylulose-5-phosphate (DXP).</text>
</comment>
<comment type="catalytic activity">
    <reaction evidence="1">
        <text>D-glyceraldehyde 3-phosphate + pyruvate + H(+) = 1-deoxy-D-xylulose 5-phosphate + CO2</text>
        <dbReference type="Rhea" id="RHEA:12605"/>
        <dbReference type="ChEBI" id="CHEBI:15361"/>
        <dbReference type="ChEBI" id="CHEBI:15378"/>
        <dbReference type="ChEBI" id="CHEBI:16526"/>
        <dbReference type="ChEBI" id="CHEBI:57792"/>
        <dbReference type="ChEBI" id="CHEBI:59776"/>
        <dbReference type="EC" id="2.2.1.7"/>
    </reaction>
</comment>
<comment type="cofactor">
    <cofactor evidence="1">
        <name>Mg(2+)</name>
        <dbReference type="ChEBI" id="CHEBI:18420"/>
    </cofactor>
    <text evidence="1">Binds 1 Mg(2+) ion per subunit.</text>
</comment>
<comment type="cofactor">
    <cofactor evidence="1">
        <name>thiamine diphosphate</name>
        <dbReference type="ChEBI" id="CHEBI:58937"/>
    </cofactor>
    <text evidence="1">Binds 1 thiamine pyrophosphate per subunit.</text>
</comment>
<comment type="pathway">
    <text evidence="1">Metabolic intermediate biosynthesis; 1-deoxy-D-xylulose 5-phosphate biosynthesis; 1-deoxy-D-xylulose 5-phosphate from D-glyceraldehyde 3-phosphate and pyruvate: step 1/1.</text>
</comment>
<comment type="subunit">
    <text evidence="1">Homodimer.</text>
</comment>
<comment type="similarity">
    <text evidence="1">Belongs to the transketolase family. DXPS subfamily.</text>
</comment>
<reference key="1">
    <citation type="journal article" date="2007" name="PLoS Biol.">
        <title>Evolution of symbiotic bacteria in the distal human intestine.</title>
        <authorList>
            <person name="Xu J."/>
            <person name="Mahowald M.A."/>
            <person name="Ley R.E."/>
            <person name="Lozupone C.A."/>
            <person name="Hamady M."/>
            <person name="Martens E.C."/>
            <person name="Henrissat B."/>
            <person name="Coutinho P.M."/>
            <person name="Minx P."/>
            <person name="Latreille P."/>
            <person name="Cordum H."/>
            <person name="Van Brunt A."/>
            <person name="Kim K."/>
            <person name="Fulton R.S."/>
            <person name="Fulton L.A."/>
            <person name="Clifton S.W."/>
            <person name="Wilson R.K."/>
            <person name="Knight R.D."/>
            <person name="Gordon J.I."/>
        </authorList>
    </citation>
    <scope>NUCLEOTIDE SEQUENCE [LARGE SCALE GENOMIC DNA]</scope>
    <source>
        <strain>ATCC 8503 / DSM 20701 / CIP 104284 / JCM 5825 / NCTC 11152</strain>
    </source>
</reference>
<accession>A6LFB9</accession>
<name>DXS_PARD8</name>
<evidence type="ECO:0000255" key="1">
    <source>
        <dbReference type="HAMAP-Rule" id="MF_00315"/>
    </source>
</evidence>
<feature type="chain" id="PRO_1000019053" description="1-deoxy-D-xylulose-5-phosphate synthase">
    <location>
        <begin position="1"/>
        <end position="632"/>
    </location>
</feature>
<feature type="binding site" evidence="1">
    <location>
        <position position="79"/>
    </location>
    <ligand>
        <name>thiamine diphosphate</name>
        <dbReference type="ChEBI" id="CHEBI:58937"/>
    </ligand>
</feature>
<feature type="binding site" evidence="1">
    <location>
        <begin position="120"/>
        <end position="122"/>
    </location>
    <ligand>
        <name>thiamine diphosphate</name>
        <dbReference type="ChEBI" id="CHEBI:58937"/>
    </ligand>
</feature>
<feature type="binding site" evidence="1">
    <location>
        <position position="152"/>
    </location>
    <ligand>
        <name>Mg(2+)</name>
        <dbReference type="ChEBI" id="CHEBI:18420"/>
    </ligand>
</feature>
<feature type="binding site" evidence="1">
    <location>
        <begin position="153"/>
        <end position="154"/>
    </location>
    <ligand>
        <name>thiamine diphosphate</name>
        <dbReference type="ChEBI" id="CHEBI:58937"/>
    </ligand>
</feature>
<feature type="binding site" evidence="1">
    <location>
        <position position="181"/>
    </location>
    <ligand>
        <name>Mg(2+)</name>
        <dbReference type="ChEBI" id="CHEBI:18420"/>
    </ligand>
</feature>
<feature type="binding site" evidence="1">
    <location>
        <position position="181"/>
    </location>
    <ligand>
        <name>thiamine diphosphate</name>
        <dbReference type="ChEBI" id="CHEBI:58937"/>
    </ligand>
</feature>
<feature type="binding site" evidence="1">
    <location>
        <position position="293"/>
    </location>
    <ligand>
        <name>thiamine diphosphate</name>
        <dbReference type="ChEBI" id="CHEBI:58937"/>
    </ligand>
</feature>
<feature type="binding site" evidence="1">
    <location>
        <position position="377"/>
    </location>
    <ligand>
        <name>thiamine diphosphate</name>
        <dbReference type="ChEBI" id="CHEBI:58937"/>
    </ligand>
</feature>
<dbReference type="EC" id="2.2.1.7" evidence="1"/>
<dbReference type="EMBL" id="CP000140">
    <property type="protein sequence ID" value="ABR44383.1"/>
    <property type="molecule type" value="Genomic_DNA"/>
</dbReference>
<dbReference type="RefSeq" id="WP_008780643.1">
    <property type="nucleotide sequence ID" value="NC_009615.1"/>
</dbReference>
<dbReference type="SMR" id="A6LFB9"/>
<dbReference type="STRING" id="435591.BDI_2664"/>
<dbReference type="PaxDb" id="435591-BDI_2664"/>
<dbReference type="KEGG" id="pdi:BDI_2664"/>
<dbReference type="eggNOG" id="COG1154">
    <property type="taxonomic scope" value="Bacteria"/>
</dbReference>
<dbReference type="HOGENOM" id="CLU_009227_1_4_10"/>
<dbReference type="BioCyc" id="PDIS435591:G1G5A-2738-MONOMER"/>
<dbReference type="UniPathway" id="UPA00064">
    <property type="reaction ID" value="UER00091"/>
</dbReference>
<dbReference type="Proteomes" id="UP000000566">
    <property type="component" value="Chromosome"/>
</dbReference>
<dbReference type="GO" id="GO:0005829">
    <property type="term" value="C:cytosol"/>
    <property type="evidence" value="ECO:0007669"/>
    <property type="project" value="TreeGrafter"/>
</dbReference>
<dbReference type="GO" id="GO:0008661">
    <property type="term" value="F:1-deoxy-D-xylulose-5-phosphate synthase activity"/>
    <property type="evidence" value="ECO:0007669"/>
    <property type="project" value="UniProtKB-UniRule"/>
</dbReference>
<dbReference type="GO" id="GO:0000287">
    <property type="term" value="F:magnesium ion binding"/>
    <property type="evidence" value="ECO:0007669"/>
    <property type="project" value="UniProtKB-UniRule"/>
</dbReference>
<dbReference type="GO" id="GO:0030976">
    <property type="term" value="F:thiamine pyrophosphate binding"/>
    <property type="evidence" value="ECO:0007669"/>
    <property type="project" value="UniProtKB-UniRule"/>
</dbReference>
<dbReference type="GO" id="GO:0052865">
    <property type="term" value="P:1-deoxy-D-xylulose 5-phosphate biosynthetic process"/>
    <property type="evidence" value="ECO:0007669"/>
    <property type="project" value="UniProtKB-UniPathway"/>
</dbReference>
<dbReference type="GO" id="GO:0019288">
    <property type="term" value="P:isopentenyl diphosphate biosynthetic process, methylerythritol 4-phosphate pathway"/>
    <property type="evidence" value="ECO:0007669"/>
    <property type="project" value="TreeGrafter"/>
</dbReference>
<dbReference type="GO" id="GO:0016114">
    <property type="term" value="P:terpenoid biosynthetic process"/>
    <property type="evidence" value="ECO:0007669"/>
    <property type="project" value="UniProtKB-UniRule"/>
</dbReference>
<dbReference type="GO" id="GO:0009228">
    <property type="term" value="P:thiamine biosynthetic process"/>
    <property type="evidence" value="ECO:0007669"/>
    <property type="project" value="UniProtKB-UniRule"/>
</dbReference>
<dbReference type="CDD" id="cd02007">
    <property type="entry name" value="TPP_DXS"/>
    <property type="match status" value="1"/>
</dbReference>
<dbReference type="CDD" id="cd07033">
    <property type="entry name" value="TPP_PYR_DXS_TK_like"/>
    <property type="match status" value="1"/>
</dbReference>
<dbReference type="FunFam" id="3.40.50.920:FF:000002">
    <property type="entry name" value="1-deoxy-D-xylulose-5-phosphate synthase"/>
    <property type="match status" value="1"/>
</dbReference>
<dbReference type="FunFam" id="3.40.50.970:FF:000005">
    <property type="entry name" value="1-deoxy-D-xylulose-5-phosphate synthase"/>
    <property type="match status" value="1"/>
</dbReference>
<dbReference type="Gene3D" id="3.40.50.920">
    <property type="match status" value="1"/>
</dbReference>
<dbReference type="Gene3D" id="3.40.50.970">
    <property type="match status" value="2"/>
</dbReference>
<dbReference type="HAMAP" id="MF_00315">
    <property type="entry name" value="DXP_synth"/>
    <property type="match status" value="1"/>
</dbReference>
<dbReference type="InterPro" id="IPR005477">
    <property type="entry name" value="Dxylulose-5-P_synthase"/>
</dbReference>
<dbReference type="InterPro" id="IPR029061">
    <property type="entry name" value="THDP-binding"/>
</dbReference>
<dbReference type="InterPro" id="IPR009014">
    <property type="entry name" value="Transketo_C/PFOR_II"/>
</dbReference>
<dbReference type="InterPro" id="IPR005475">
    <property type="entry name" value="Transketolase-like_Pyr-bd"/>
</dbReference>
<dbReference type="InterPro" id="IPR020826">
    <property type="entry name" value="Transketolase_BS"/>
</dbReference>
<dbReference type="InterPro" id="IPR033248">
    <property type="entry name" value="Transketolase_C"/>
</dbReference>
<dbReference type="NCBIfam" id="TIGR00204">
    <property type="entry name" value="dxs"/>
    <property type="match status" value="1"/>
</dbReference>
<dbReference type="NCBIfam" id="NF003933">
    <property type="entry name" value="PRK05444.2-2"/>
    <property type="match status" value="1"/>
</dbReference>
<dbReference type="PANTHER" id="PTHR43322">
    <property type="entry name" value="1-D-DEOXYXYLULOSE 5-PHOSPHATE SYNTHASE-RELATED"/>
    <property type="match status" value="1"/>
</dbReference>
<dbReference type="PANTHER" id="PTHR43322:SF5">
    <property type="entry name" value="1-DEOXY-D-XYLULOSE-5-PHOSPHATE SYNTHASE, CHLOROPLASTIC"/>
    <property type="match status" value="1"/>
</dbReference>
<dbReference type="Pfam" id="PF13292">
    <property type="entry name" value="DXP_synthase_N"/>
    <property type="match status" value="1"/>
</dbReference>
<dbReference type="Pfam" id="PF02779">
    <property type="entry name" value="Transket_pyr"/>
    <property type="match status" value="1"/>
</dbReference>
<dbReference type="Pfam" id="PF02780">
    <property type="entry name" value="Transketolase_C"/>
    <property type="match status" value="1"/>
</dbReference>
<dbReference type="SMART" id="SM00861">
    <property type="entry name" value="Transket_pyr"/>
    <property type="match status" value="1"/>
</dbReference>
<dbReference type="SUPFAM" id="SSF52518">
    <property type="entry name" value="Thiamin diphosphate-binding fold (THDP-binding)"/>
    <property type="match status" value="2"/>
</dbReference>
<dbReference type="SUPFAM" id="SSF52922">
    <property type="entry name" value="TK C-terminal domain-like"/>
    <property type="match status" value="1"/>
</dbReference>
<dbReference type="PROSITE" id="PS00802">
    <property type="entry name" value="TRANSKETOLASE_2"/>
    <property type="match status" value="1"/>
</dbReference>
<keyword id="KW-0414">Isoprene biosynthesis</keyword>
<keyword id="KW-0460">Magnesium</keyword>
<keyword id="KW-0479">Metal-binding</keyword>
<keyword id="KW-1185">Reference proteome</keyword>
<keyword id="KW-0784">Thiamine biosynthesis</keyword>
<keyword id="KW-0786">Thiamine pyrophosphate</keyword>
<keyword id="KW-0808">Transferase</keyword>
<gene>
    <name evidence="1" type="primary">dxs</name>
    <name type="ordered locus">BDI_2664</name>
</gene>
<protein>
    <recommendedName>
        <fullName evidence="1">1-deoxy-D-xylulose-5-phosphate synthase</fullName>
        <ecNumber evidence="1">2.2.1.7</ecNumber>
    </recommendedName>
    <alternativeName>
        <fullName evidence="1">1-deoxyxylulose-5-phosphate synthase</fullName>
        <shortName evidence="1">DXP synthase</shortName>
        <shortName evidence="1">DXPS</shortName>
    </alternativeName>
</protein>
<sequence>MAESKVEHLLDSIHFPEDLRHLSQDKLEQVCADLRQYIIDVLSENPGHLGASLGTVELTVALHYVFNTPYDRIVWDVGHQAYGHKILTGRKDIFHTLRKFKGISGFPNPAESEYDAFIAGHASNSISAAMGMSVASALKKELDRHVIAVIGDGAMTGGLAFEGLNNASANPNNLLIILNDNDMAIDHSVGGLSQYLVDITTSQAYNKMRYDVYRGLKKIKLINNDRRENILRFNNSLKALLTQQHNLFEGFSIRYFGPVDGHDVNYLVKVLNDIKDMQGPKLLHIKTKKGKGFKPAEESATEWHAPGKFNKETGQRIIVRKLDEPQLYQDVFGHTLVELAENDERIVGVTPAMPSGCSMTYMMKAFPDRAFDVGIAEGHSVTFSAGLAKEGMIPFCNVYSSFMQRAYDMVIHDVALQKLHMVICLDRAGLVGEDGATHHGVFDLAYLRPIPNLVIASPLNELDLRNLMYTGYAAFDGPFVIRYPRGKGEMKDWRNEMQVLPIGKGKKLRDGDDIAVLSIGPIGNEVIKAIEMVKEERVSIAHYDMIYLKPLDEELLHEIGQKYNRIITVENGVIKGGFGSAVLEFMADNGYTPHVKRIGVPDAFIEHGSIPELYQLCGMDAESIAKQLKKEN</sequence>
<organism>
    <name type="scientific">Parabacteroides distasonis (strain ATCC 8503 / DSM 20701 / CIP 104284 / JCM 5825 / NCTC 11152)</name>
    <dbReference type="NCBI Taxonomy" id="435591"/>
    <lineage>
        <taxon>Bacteria</taxon>
        <taxon>Pseudomonadati</taxon>
        <taxon>Bacteroidota</taxon>
        <taxon>Bacteroidia</taxon>
        <taxon>Bacteroidales</taxon>
        <taxon>Tannerellaceae</taxon>
        <taxon>Parabacteroides</taxon>
    </lineage>
</organism>